<accession>A0R906</accession>
<feature type="chain" id="PRO_0000313128" description="DNA ligase">
    <location>
        <begin position="1"/>
        <end position="669"/>
    </location>
</feature>
<feature type="domain" description="BRCT" evidence="1">
    <location>
        <begin position="591"/>
        <end position="669"/>
    </location>
</feature>
<feature type="active site" description="N6-AMP-lysine intermediate" evidence="1">
    <location>
        <position position="116"/>
    </location>
</feature>
<feature type="binding site" evidence="1">
    <location>
        <begin position="34"/>
        <end position="38"/>
    </location>
    <ligand>
        <name>NAD(+)</name>
        <dbReference type="ChEBI" id="CHEBI:57540"/>
    </ligand>
</feature>
<feature type="binding site" evidence="1">
    <location>
        <begin position="83"/>
        <end position="84"/>
    </location>
    <ligand>
        <name>NAD(+)</name>
        <dbReference type="ChEBI" id="CHEBI:57540"/>
    </ligand>
</feature>
<feature type="binding site" evidence="1">
    <location>
        <position position="114"/>
    </location>
    <ligand>
        <name>NAD(+)</name>
        <dbReference type="ChEBI" id="CHEBI:57540"/>
    </ligand>
</feature>
<feature type="binding site" evidence="1">
    <location>
        <position position="137"/>
    </location>
    <ligand>
        <name>NAD(+)</name>
        <dbReference type="ChEBI" id="CHEBI:57540"/>
    </ligand>
</feature>
<feature type="binding site" evidence="1">
    <location>
        <position position="171"/>
    </location>
    <ligand>
        <name>NAD(+)</name>
        <dbReference type="ChEBI" id="CHEBI:57540"/>
    </ligand>
</feature>
<feature type="binding site" evidence="1">
    <location>
        <position position="287"/>
    </location>
    <ligand>
        <name>NAD(+)</name>
        <dbReference type="ChEBI" id="CHEBI:57540"/>
    </ligand>
</feature>
<feature type="binding site" evidence="1">
    <location>
        <position position="311"/>
    </location>
    <ligand>
        <name>NAD(+)</name>
        <dbReference type="ChEBI" id="CHEBI:57540"/>
    </ligand>
</feature>
<feature type="binding site" evidence="1">
    <location>
        <position position="405"/>
    </location>
    <ligand>
        <name>Zn(2+)</name>
        <dbReference type="ChEBI" id="CHEBI:29105"/>
    </ligand>
</feature>
<feature type="binding site" evidence="1">
    <location>
        <position position="408"/>
    </location>
    <ligand>
        <name>Zn(2+)</name>
        <dbReference type="ChEBI" id="CHEBI:29105"/>
    </ligand>
</feature>
<feature type="binding site" evidence="1">
    <location>
        <position position="423"/>
    </location>
    <ligand>
        <name>Zn(2+)</name>
        <dbReference type="ChEBI" id="CHEBI:29105"/>
    </ligand>
</feature>
<feature type="binding site" evidence="1">
    <location>
        <position position="428"/>
    </location>
    <ligand>
        <name>Zn(2+)</name>
        <dbReference type="ChEBI" id="CHEBI:29105"/>
    </ligand>
</feature>
<organism>
    <name type="scientific">Bacillus thuringiensis (strain Al Hakam)</name>
    <dbReference type="NCBI Taxonomy" id="412694"/>
    <lineage>
        <taxon>Bacteria</taxon>
        <taxon>Bacillati</taxon>
        <taxon>Bacillota</taxon>
        <taxon>Bacilli</taxon>
        <taxon>Bacillales</taxon>
        <taxon>Bacillaceae</taxon>
        <taxon>Bacillus</taxon>
        <taxon>Bacillus cereus group</taxon>
    </lineage>
</organism>
<name>DNLJ_BACAH</name>
<keyword id="KW-0227">DNA damage</keyword>
<keyword id="KW-0234">DNA repair</keyword>
<keyword id="KW-0235">DNA replication</keyword>
<keyword id="KW-0436">Ligase</keyword>
<keyword id="KW-0460">Magnesium</keyword>
<keyword id="KW-0464">Manganese</keyword>
<keyword id="KW-0479">Metal-binding</keyword>
<keyword id="KW-0520">NAD</keyword>
<keyword id="KW-0862">Zinc</keyword>
<proteinExistence type="inferred from homology"/>
<reference key="1">
    <citation type="journal article" date="2007" name="J. Bacteriol.">
        <title>The complete genome sequence of Bacillus thuringiensis Al Hakam.</title>
        <authorList>
            <person name="Challacombe J.F."/>
            <person name="Altherr M.R."/>
            <person name="Xie G."/>
            <person name="Bhotika S.S."/>
            <person name="Brown N."/>
            <person name="Bruce D."/>
            <person name="Campbell C.S."/>
            <person name="Campbell M.L."/>
            <person name="Chen J."/>
            <person name="Chertkov O."/>
            <person name="Cleland C."/>
            <person name="Dimitrijevic M."/>
            <person name="Doggett N.A."/>
            <person name="Fawcett J.J."/>
            <person name="Glavina T."/>
            <person name="Goodwin L.A."/>
            <person name="Green L.D."/>
            <person name="Han C.S."/>
            <person name="Hill K.K."/>
            <person name="Hitchcock P."/>
            <person name="Jackson P.J."/>
            <person name="Keim P."/>
            <person name="Kewalramani A.R."/>
            <person name="Longmire J."/>
            <person name="Lucas S."/>
            <person name="Malfatti S."/>
            <person name="Martinez D."/>
            <person name="McMurry K."/>
            <person name="Meincke L.J."/>
            <person name="Misra M."/>
            <person name="Moseman B.L."/>
            <person name="Mundt M."/>
            <person name="Munk A.C."/>
            <person name="Okinaka R.T."/>
            <person name="Parson-Quintana B."/>
            <person name="Reilly L.P."/>
            <person name="Richardson P."/>
            <person name="Robinson D.L."/>
            <person name="Saunders E."/>
            <person name="Tapia R."/>
            <person name="Tesmer J.G."/>
            <person name="Thayer N."/>
            <person name="Thompson L.S."/>
            <person name="Tice H."/>
            <person name="Ticknor L.O."/>
            <person name="Wills P.L."/>
            <person name="Gilna P."/>
            <person name="Brettin T.S."/>
        </authorList>
    </citation>
    <scope>NUCLEOTIDE SEQUENCE [LARGE SCALE GENOMIC DNA]</scope>
    <source>
        <strain>Al Hakam</strain>
    </source>
</reference>
<gene>
    <name evidence="1" type="primary">ligA</name>
    <name type="ordered locus">BALH_0298</name>
</gene>
<dbReference type="EC" id="6.5.1.2" evidence="1"/>
<dbReference type="EMBL" id="CP000485">
    <property type="protein sequence ID" value="ABK83699.1"/>
    <property type="molecule type" value="Genomic_DNA"/>
</dbReference>
<dbReference type="RefSeq" id="WP_000031442.1">
    <property type="nucleotide sequence ID" value="NC_008600.1"/>
</dbReference>
<dbReference type="SMR" id="A0R906"/>
<dbReference type="KEGG" id="btl:BALH_0298"/>
<dbReference type="HOGENOM" id="CLU_007764_2_1_9"/>
<dbReference type="GO" id="GO:0005829">
    <property type="term" value="C:cytosol"/>
    <property type="evidence" value="ECO:0007669"/>
    <property type="project" value="TreeGrafter"/>
</dbReference>
<dbReference type="GO" id="GO:0003677">
    <property type="term" value="F:DNA binding"/>
    <property type="evidence" value="ECO:0007669"/>
    <property type="project" value="InterPro"/>
</dbReference>
<dbReference type="GO" id="GO:0003911">
    <property type="term" value="F:DNA ligase (NAD+) activity"/>
    <property type="evidence" value="ECO:0007669"/>
    <property type="project" value="UniProtKB-UniRule"/>
</dbReference>
<dbReference type="GO" id="GO:0046872">
    <property type="term" value="F:metal ion binding"/>
    <property type="evidence" value="ECO:0007669"/>
    <property type="project" value="UniProtKB-KW"/>
</dbReference>
<dbReference type="GO" id="GO:0006281">
    <property type="term" value="P:DNA repair"/>
    <property type="evidence" value="ECO:0007669"/>
    <property type="project" value="UniProtKB-KW"/>
</dbReference>
<dbReference type="GO" id="GO:0006260">
    <property type="term" value="P:DNA replication"/>
    <property type="evidence" value="ECO:0007669"/>
    <property type="project" value="UniProtKB-KW"/>
</dbReference>
<dbReference type="CDD" id="cd17748">
    <property type="entry name" value="BRCT_DNA_ligase_like"/>
    <property type="match status" value="1"/>
</dbReference>
<dbReference type="CDD" id="cd00114">
    <property type="entry name" value="LIGANc"/>
    <property type="match status" value="1"/>
</dbReference>
<dbReference type="FunFam" id="1.10.150.20:FF:000006">
    <property type="entry name" value="DNA ligase"/>
    <property type="match status" value="1"/>
</dbReference>
<dbReference type="FunFam" id="1.10.150.20:FF:000007">
    <property type="entry name" value="DNA ligase"/>
    <property type="match status" value="1"/>
</dbReference>
<dbReference type="FunFam" id="1.10.287.610:FF:000002">
    <property type="entry name" value="DNA ligase"/>
    <property type="match status" value="1"/>
</dbReference>
<dbReference type="FunFam" id="2.40.50.140:FF:000012">
    <property type="entry name" value="DNA ligase"/>
    <property type="match status" value="1"/>
</dbReference>
<dbReference type="FunFam" id="3.30.470.30:FF:000001">
    <property type="entry name" value="DNA ligase"/>
    <property type="match status" value="1"/>
</dbReference>
<dbReference type="FunFam" id="3.40.50.10190:FF:000026">
    <property type="entry name" value="DNA ligase"/>
    <property type="match status" value="1"/>
</dbReference>
<dbReference type="FunFam" id="6.20.10.30:FF:000002">
    <property type="entry name" value="DNA ligase"/>
    <property type="match status" value="1"/>
</dbReference>
<dbReference type="Gene3D" id="6.20.10.30">
    <property type="match status" value="1"/>
</dbReference>
<dbReference type="Gene3D" id="1.10.150.20">
    <property type="entry name" value="5' to 3' exonuclease, C-terminal subdomain"/>
    <property type="match status" value="2"/>
</dbReference>
<dbReference type="Gene3D" id="3.40.50.10190">
    <property type="entry name" value="BRCT domain"/>
    <property type="match status" value="1"/>
</dbReference>
<dbReference type="Gene3D" id="3.30.470.30">
    <property type="entry name" value="DNA ligase/mRNA capping enzyme"/>
    <property type="match status" value="1"/>
</dbReference>
<dbReference type="Gene3D" id="1.10.287.610">
    <property type="entry name" value="Helix hairpin bin"/>
    <property type="match status" value="1"/>
</dbReference>
<dbReference type="Gene3D" id="2.40.50.140">
    <property type="entry name" value="Nucleic acid-binding proteins"/>
    <property type="match status" value="1"/>
</dbReference>
<dbReference type="HAMAP" id="MF_01588">
    <property type="entry name" value="DNA_ligase_A"/>
    <property type="match status" value="1"/>
</dbReference>
<dbReference type="InterPro" id="IPR001357">
    <property type="entry name" value="BRCT_dom"/>
</dbReference>
<dbReference type="InterPro" id="IPR036420">
    <property type="entry name" value="BRCT_dom_sf"/>
</dbReference>
<dbReference type="InterPro" id="IPR041663">
    <property type="entry name" value="DisA/LigA_HHH"/>
</dbReference>
<dbReference type="InterPro" id="IPR001679">
    <property type="entry name" value="DNA_ligase"/>
</dbReference>
<dbReference type="InterPro" id="IPR018239">
    <property type="entry name" value="DNA_ligase_AS"/>
</dbReference>
<dbReference type="InterPro" id="IPR033136">
    <property type="entry name" value="DNA_ligase_CS"/>
</dbReference>
<dbReference type="InterPro" id="IPR013839">
    <property type="entry name" value="DNAligase_adenylation"/>
</dbReference>
<dbReference type="InterPro" id="IPR013840">
    <property type="entry name" value="DNAligase_N"/>
</dbReference>
<dbReference type="InterPro" id="IPR003583">
    <property type="entry name" value="Hlx-hairpin-Hlx_DNA-bd_motif"/>
</dbReference>
<dbReference type="InterPro" id="IPR012340">
    <property type="entry name" value="NA-bd_OB-fold"/>
</dbReference>
<dbReference type="InterPro" id="IPR004150">
    <property type="entry name" value="NAD_DNA_ligase_OB"/>
</dbReference>
<dbReference type="InterPro" id="IPR010994">
    <property type="entry name" value="RuvA_2-like"/>
</dbReference>
<dbReference type="InterPro" id="IPR004149">
    <property type="entry name" value="Znf_DNAligase_C4"/>
</dbReference>
<dbReference type="NCBIfam" id="TIGR00575">
    <property type="entry name" value="dnlj"/>
    <property type="match status" value="1"/>
</dbReference>
<dbReference type="NCBIfam" id="NF005932">
    <property type="entry name" value="PRK07956.1"/>
    <property type="match status" value="1"/>
</dbReference>
<dbReference type="PANTHER" id="PTHR23389">
    <property type="entry name" value="CHROMOSOME TRANSMISSION FIDELITY FACTOR 18"/>
    <property type="match status" value="1"/>
</dbReference>
<dbReference type="PANTHER" id="PTHR23389:SF9">
    <property type="entry name" value="DNA LIGASE"/>
    <property type="match status" value="1"/>
</dbReference>
<dbReference type="Pfam" id="PF00533">
    <property type="entry name" value="BRCT"/>
    <property type="match status" value="1"/>
</dbReference>
<dbReference type="Pfam" id="PF01653">
    <property type="entry name" value="DNA_ligase_aden"/>
    <property type="match status" value="1"/>
</dbReference>
<dbReference type="Pfam" id="PF03120">
    <property type="entry name" value="DNA_ligase_OB"/>
    <property type="match status" value="1"/>
</dbReference>
<dbReference type="Pfam" id="PF03119">
    <property type="entry name" value="DNA_ligase_ZBD"/>
    <property type="match status" value="1"/>
</dbReference>
<dbReference type="Pfam" id="PF12826">
    <property type="entry name" value="HHH_2"/>
    <property type="match status" value="1"/>
</dbReference>
<dbReference type="Pfam" id="PF14520">
    <property type="entry name" value="HHH_5"/>
    <property type="match status" value="1"/>
</dbReference>
<dbReference type="Pfam" id="PF22745">
    <property type="entry name" value="Nlig-Ia"/>
    <property type="match status" value="1"/>
</dbReference>
<dbReference type="PIRSF" id="PIRSF001604">
    <property type="entry name" value="LigA"/>
    <property type="match status" value="1"/>
</dbReference>
<dbReference type="SMART" id="SM00292">
    <property type="entry name" value="BRCT"/>
    <property type="match status" value="1"/>
</dbReference>
<dbReference type="SMART" id="SM00278">
    <property type="entry name" value="HhH1"/>
    <property type="match status" value="3"/>
</dbReference>
<dbReference type="SMART" id="SM00532">
    <property type="entry name" value="LIGANc"/>
    <property type="match status" value="1"/>
</dbReference>
<dbReference type="SUPFAM" id="SSF52113">
    <property type="entry name" value="BRCT domain"/>
    <property type="match status" value="1"/>
</dbReference>
<dbReference type="SUPFAM" id="SSF56091">
    <property type="entry name" value="DNA ligase/mRNA capping enzyme, catalytic domain"/>
    <property type="match status" value="1"/>
</dbReference>
<dbReference type="SUPFAM" id="SSF50249">
    <property type="entry name" value="Nucleic acid-binding proteins"/>
    <property type="match status" value="1"/>
</dbReference>
<dbReference type="SUPFAM" id="SSF47781">
    <property type="entry name" value="RuvA domain 2-like"/>
    <property type="match status" value="1"/>
</dbReference>
<dbReference type="PROSITE" id="PS50172">
    <property type="entry name" value="BRCT"/>
    <property type="match status" value="1"/>
</dbReference>
<dbReference type="PROSITE" id="PS01055">
    <property type="entry name" value="DNA_LIGASE_N1"/>
    <property type="match status" value="1"/>
</dbReference>
<dbReference type="PROSITE" id="PS01056">
    <property type="entry name" value="DNA_LIGASE_N2"/>
    <property type="match status" value="1"/>
</dbReference>
<comment type="function">
    <text evidence="1">DNA ligase that catalyzes the formation of phosphodiester linkages between 5'-phosphoryl and 3'-hydroxyl groups in double-stranded DNA using NAD as a coenzyme and as the energy source for the reaction. It is essential for DNA replication and repair of damaged DNA.</text>
</comment>
<comment type="catalytic activity">
    <reaction evidence="1">
        <text>NAD(+) + (deoxyribonucleotide)n-3'-hydroxyl + 5'-phospho-(deoxyribonucleotide)m = (deoxyribonucleotide)n+m + AMP + beta-nicotinamide D-nucleotide.</text>
        <dbReference type="EC" id="6.5.1.2"/>
    </reaction>
</comment>
<comment type="cofactor">
    <cofactor evidence="1">
        <name>Mg(2+)</name>
        <dbReference type="ChEBI" id="CHEBI:18420"/>
    </cofactor>
    <cofactor evidence="1">
        <name>Mn(2+)</name>
        <dbReference type="ChEBI" id="CHEBI:29035"/>
    </cofactor>
</comment>
<comment type="similarity">
    <text evidence="1">Belongs to the NAD-dependent DNA ligase family. LigA subfamily.</text>
</comment>
<sequence>MSKEIAKKRIEELRDLLNTFNYQYHVLDNPSVSDAEYDRNMQELIKLEAENPEFMSEDSPSVRVGGTVLDIFEKVTHKSPMLSLGNAFNEGDLRDFDRRVRQGIDDANVRYICELKIDGLAVSLHYEKGRFIQGATRGDGVTGEDITQNLKTIKAIPLRLNEEVTLEARGEAYMPKRSFVKLNEEKEQNGEDVFANPRNAAAGSIRQLDPKIAAKRNLSMFVYGLANVEEKTIPSHSESLDFLGELGFKTNPNRRTCETIEEVIAYVEEWQEKRPHLDYEIDGIVIKVDDVALQESLGTTAKSPRWAIAYKFPAEEVVTRLTGIELSVGRTGVVTPTAELEPVRVAGTIVRRASLHNEDLIREKDIRIGDYVVVKKAGDIIPEVVNVIFDKRTGEEEEYHMPTHCPACESELVRLEEEVALRCINPTCPAQIREGLIHFVSRNAMNIDGLGERVITQLFDADYIRTFADLYSLTKEQLLQLERFGEKSATNLVQAIENSKENSLERLLFGLGIRHVGAKAARTFAEHFETMDALVKATEEELKAINEIGEKMAQSVVAYFDNEDVLELLQQFKEYGVNMTYKGIKIADLQNVESYFAGKTVVLTGKLEVMGRSEAKKKIEALGGKVTGSVSKSTDLVVAGEAAGSKLAQAEKHNVEVWNEERFLQELNK</sequence>
<protein>
    <recommendedName>
        <fullName evidence="1">DNA ligase</fullName>
        <ecNumber evidence="1">6.5.1.2</ecNumber>
    </recommendedName>
    <alternativeName>
        <fullName evidence="1">Polydeoxyribonucleotide synthase [NAD(+)]</fullName>
    </alternativeName>
</protein>
<evidence type="ECO:0000255" key="1">
    <source>
        <dbReference type="HAMAP-Rule" id="MF_01588"/>
    </source>
</evidence>